<comment type="catalytic activity">
    <reaction evidence="1">
        <text>adenine + H2O + H(+) = hypoxanthine + NH4(+)</text>
        <dbReference type="Rhea" id="RHEA:23688"/>
        <dbReference type="ChEBI" id="CHEBI:15377"/>
        <dbReference type="ChEBI" id="CHEBI:15378"/>
        <dbReference type="ChEBI" id="CHEBI:16708"/>
        <dbReference type="ChEBI" id="CHEBI:17368"/>
        <dbReference type="ChEBI" id="CHEBI:28938"/>
        <dbReference type="EC" id="3.5.4.2"/>
    </reaction>
</comment>
<comment type="cofactor">
    <cofactor evidence="1">
        <name>Mn(2+)</name>
        <dbReference type="ChEBI" id="CHEBI:29035"/>
    </cofactor>
</comment>
<comment type="subunit">
    <text evidence="1">Homodimer.</text>
</comment>
<comment type="similarity">
    <text evidence="1">Belongs to the metallo-dependent hydrolases superfamily. Adenine deaminase family.</text>
</comment>
<accession>A8A6C8</accession>
<feature type="chain" id="PRO_1000068610" description="Adenine deaminase">
    <location>
        <begin position="1"/>
        <end position="588"/>
    </location>
</feature>
<protein>
    <recommendedName>
        <fullName evidence="1">Adenine deaminase</fullName>
        <shortName evidence="1">Adenase</shortName>
        <shortName evidence="1">Adenine aminase</shortName>
        <ecNumber evidence="1">3.5.4.2</ecNumber>
    </recommendedName>
</protein>
<name>ADEC_ECOHS</name>
<evidence type="ECO:0000255" key="1">
    <source>
        <dbReference type="HAMAP-Rule" id="MF_01518"/>
    </source>
</evidence>
<organism>
    <name type="scientific">Escherichia coli O9:H4 (strain HS)</name>
    <dbReference type="NCBI Taxonomy" id="331112"/>
    <lineage>
        <taxon>Bacteria</taxon>
        <taxon>Pseudomonadati</taxon>
        <taxon>Pseudomonadota</taxon>
        <taxon>Gammaproteobacteria</taxon>
        <taxon>Enterobacterales</taxon>
        <taxon>Enterobacteriaceae</taxon>
        <taxon>Escherichia</taxon>
    </lineage>
</organism>
<dbReference type="EC" id="3.5.4.2" evidence="1"/>
<dbReference type="EMBL" id="CP000802">
    <property type="protein sequence ID" value="ABV08082.1"/>
    <property type="molecule type" value="Genomic_DNA"/>
</dbReference>
<dbReference type="RefSeq" id="WP_001065726.1">
    <property type="nucleotide sequence ID" value="NC_009800.1"/>
</dbReference>
<dbReference type="SMR" id="A8A6C8"/>
<dbReference type="KEGG" id="ecx:EcHS_A3878"/>
<dbReference type="HOGENOM" id="CLU_027935_0_0_6"/>
<dbReference type="GO" id="GO:0000034">
    <property type="term" value="F:adenine deaminase activity"/>
    <property type="evidence" value="ECO:0007669"/>
    <property type="project" value="UniProtKB-UniRule"/>
</dbReference>
<dbReference type="GO" id="GO:0006146">
    <property type="term" value="P:adenine catabolic process"/>
    <property type="evidence" value="ECO:0007669"/>
    <property type="project" value="InterPro"/>
</dbReference>
<dbReference type="CDD" id="cd01295">
    <property type="entry name" value="AdeC"/>
    <property type="match status" value="1"/>
</dbReference>
<dbReference type="FunFam" id="3.20.20.140:FF:000016">
    <property type="entry name" value="Adenine deaminase"/>
    <property type="match status" value="1"/>
</dbReference>
<dbReference type="Gene3D" id="3.20.20.140">
    <property type="entry name" value="Metal-dependent hydrolases"/>
    <property type="match status" value="1"/>
</dbReference>
<dbReference type="Gene3D" id="2.30.40.10">
    <property type="entry name" value="Urease, subunit C, domain 1"/>
    <property type="match status" value="1"/>
</dbReference>
<dbReference type="HAMAP" id="MF_01518">
    <property type="entry name" value="Adenine_deamin"/>
    <property type="match status" value="1"/>
</dbReference>
<dbReference type="InterPro" id="IPR006679">
    <property type="entry name" value="Adenine_deam"/>
</dbReference>
<dbReference type="InterPro" id="IPR026912">
    <property type="entry name" value="Adenine_deam_C"/>
</dbReference>
<dbReference type="InterPro" id="IPR006680">
    <property type="entry name" value="Amidohydro-rel"/>
</dbReference>
<dbReference type="InterPro" id="IPR011059">
    <property type="entry name" value="Metal-dep_hydrolase_composite"/>
</dbReference>
<dbReference type="InterPro" id="IPR032466">
    <property type="entry name" value="Metal_Hydrolase"/>
</dbReference>
<dbReference type="NCBIfam" id="TIGR01178">
    <property type="entry name" value="ade"/>
    <property type="match status" value="1"/>
</dbReference>
<dbReference type="NCBIfam" id="NF007457">
    <property type="entry name" value="PRK10027.1"/>
    <property type="match status" value="1"/>
</dbReference>
<dbReference type="PANTHER" id="PTHR11113:SF2">
    <property type="entry name" value="ADENINE DEAMINASE"/>
    <property type="match status" value="1"/>
</dbReference>
<dbReference type="PANTHER" id="PTHR11113">
    <property type="entry name" value="N-ACETYLGLUCOSAMINE-6-PHOSPHATE DEACETYLASE"/>
    <property type="match status" value="1"/>
</dbReference>
<dbReference type="Pfam" id="PF13382">
    <property type="entry name" value="Adenine_deam_C"/>
    <property type="match status" value="1"/>
</dbReference>
<dbReference type="Pfam" id="PF01979">
    <property type="entry name" value="Amidohydro_1"/>
    <property type="match status" value="1"/>
</dbReference>
<dbReference type="SUPFAM" id="SSF51338">
    <property type="entry name" value="Composite domain of metallo-dependent hydrolases"/>
    <property type="match status" value="1"/>
</dbReference>
<dbReference type="SUPFAM" id="SSF51556">
    <property type="entry name" value="Metallo-dependent hydrolases"/>
    <property type="match status" value="1"/>
</dbReference>
<gene>
    <name evidence="1" type="primary">ade</name>
    <name type="ordered locus">EcHS_A3878</name>
</gene>
<reference key="1">
    <citation type="journal article" date="2008" name="J. Bacteriol.">
        <title>The pangenome structure of Escherichia coli: comparative genomic analysis of E. coli commensal and pathogenic isolates.</title>
        <authorList>
            <person name="Rasko D.A."/>
            <person name="Rosovitz M.J."/>
            <person name="Myers G.S.A."/>
            <person name="Mongodin E.F."/>
            <person name="Fricke W.F."/>
            <person name="Gajer P."/>
            <person name="Crabtree J."/>
            <person name="Sebaihia M."/>
            <person name="Thomson N.R."/>
            <person name="Chaudhuri R."/>
            <person name="Henderson I.R."/>
            <person name="Sperandio V."/>
            <person name="Ravel J."/>
        </authorList>
    </citation>
    <scope>NUCLEOTIDE SEQUENCE [LARGE SCALE GENOMIC DNA]</scope>
    <source>
        <strain>HS</strain>
    </source>
</reference>
<keyword id="KW-0378">Hydrolase</keyword>
<keyword id="KW-0464">Manganese</keyword>
<proteinExistence type="inferred from homology"/>
<sequence>MNNSINHKFHHISRAEYQELLAVSRGDAVADYLIDNVSILDLINGGEISGPIVIKGRYIAGVGAEYADAPALQRIDARGATAVPGFIDAHLHIESSMMTPVTFETATLPRGLTTVICDPHEIVNVMGEAGFAWFARCAEQARQNQYLQVSSCVPALEGCDVNGASFTLEQMLAWRDHPQVTGLAEMMDYPGVISGQNALLDKLDAFRHLTLDGHCPGLGGKELNAYITAGIENCHESYQLEEGRRKLQLGMSLMIREGSAARNLNALAPLINEFNSPQCMLCTDDRNPWEIAHEGHIDALIRRLIEQHNVPLHVAYRVASWSTARHFGLNHLGLLAPGKQADIVLLSDARKVTVQQVLVKGEPIDAQTLQAEESARLAQSAPPYGNTIARQPVSASDFALQFTPGKRYRVIDVIHNELITHSHSSVYSENGFDRDDVSFIAVLERYGQRLAPACGLLGGFGLNEGALAATVSHDSHNIVVIGRSAEEMALAVNQVIQDGGGLCVVRNGQVQSHLPLPIAGLMSTDTAQSLAEQIDALKAAARECGPLPDEPFIQMAFLSLPVIPALKLTSQGLFDGEKFAFTTLEVTE</sequence>